<keyword id="KW-0150">Chloroplast</keyword>
<keyword id="KW-0472">Membrane</keyword>
<keyword id="KW-0934">Plastid</keyword>
<keyword id="KW-0793">Thylakoid</keyword>
<keyword id="KW-0812">Transmembrane</keyword>
<keyword id="KW-1133">Transmembrane helix</keyword>
<organism>
    <name type="scientific">Suaeda aralocaspica</name>
    <name type="common">Seablite</name>
    <name type="synonym">Borszczowia aralocaspica</name>
    <dbReference type="NCBI Taxonomy" id="224144"/>
    <lineage>
        <taxon>Eukaryota</taxon>
        <taxon>Viridiplantae</taxon>
        <taxon>Streptophyta</taxon>
        <taxon>Embryophyta</taxon>
        <taxon>Tracheophyta</taxon>
        <taxon>Spermatophyta</taxon>
        <taxon>Magnoliopsida</taxon>
        <taxon>eudicotyledons</taxon>
        <taxon>Gunneridae</taxon>
        <taxon>Pentapetalae</taxon>
        <taxon>Caryophyllales</taxon>
        <taxon>Chenopodiaceae</taxon>
        <taxon>Suaedoideae</taxon>
        <taxon>Suaeda</taxon>
    </lineage>
</organism>
<name>PSBN_SUAAR</name>
<proteinExistence type="inferred from homology"/>
<evidence type="ECO:0000255" key="1">
    <source>
        <dbReference type="HAMAP-Rule" id="MF_00293"/>
    </source>
</evidence>
<reference key="1">
    <citation type="journal article" date="2003" name="Plant Syst. Evol.">
        <title>An integrated molecular and morphological study of the subfamily Suaedoideae Ulbr. (Chenopodiaceae).</title>
        <authorList>
            <person name="Schuetze P."/>
            <person name="Freitag H."/>
            <person name="Weising K."/>
        </authorList>
    </citation>
    <scope>NUCLEOTIDE SEQUENCE [GENOMIC DNA]</scope>
</reference>
<protein>
    <recommendedName>
        <fullName evidence="1">Protein PsbN</fullName>
    </recommendedName>
</protein>
<geneLocation type="chloroplast"/>
<accession>Q7YNI0</accession>
<sequence length="43" mass="4736">METATLIAIFISGLLVSFTGYALYTAFGQPSQQLRDPFEEHGD</sequence>
<comment type="function">
    <text evidence="1">May play a role in photosystem I and II biogenesis.</text>
</comment>
<comment type="subcellular location">
    <subcellularLocation>
        <location evidence="1">Plastid</location>
        <location evidence="1">Chloroplast thylakoid membrane</location>
        <topology evidence="1">Single-pass membrane protein</topology>
    </subcellularLocation>
</comment>
<comment type="similarity">
    <text evidence="1">Belongs to the PsbN family.</text>
</comment>
<comment type="caution">
    <text evidence="1">Originally thought to be a component of PSII; based on experiments in Synechocystis, N.tabacum and barley, and its absence from PSII in T.elongatus and T.vulcanus, this is probably not true.</text>
</comment>
<dbReference type="EMBL" id="AY181934">
    <property type="protein sequence ID" value="AAO66161.1"/>
    <property type="molecule type" value="Genomic_DNA"/>
</dbReference>
<dbReference type="SMR" id="Q7YNI0"/>
<dbReference type="GO" id="GO:0009535">
    <property type="term" value="C:chloroplast thylakoid membrane"/>
    <property type="evidence" value="ECO:0007669"/>
    <property type="project" value="UniProtKB-SubCell"/>
</dbReference>
<dbReference type="GO" id="GO:0015979">
    <property type="term" value="P:photosynthesis"/>
    <property type="evidence" value="ECO:0007669"/>
    <property type="project" value="InterPro"/>
</dbReference>
<dbReference type="HAMAP" id="MF_00293">
    <property type="entry name" value="PSII_PsbN"/>
    <property type="match status" value="1"/>
</dbReference>
<dbReference type="InterPro" id="IPR003398">
    <property type="entry name" value="PSII_PsbN"/>
</dbReference>
<dbReference type="PANTHER" id="PTHR35326">
    <property type="entry name" value="PROTEIN PSBN"/>
    <property type="match status" value="1"/>
</dbReference>
<dbReference type="PANTHER" id="PTHR35326:SF3">
    <property type="entry name" value="PROTEIN PSBN"/>
    <property type="match status" value="1"/>
</dbReference>
<dbReference type="Pfam" id="PF02468">
    <property type="entry name" value="PsbN"/>
    <property type="match status" value="1"/>
</dbReference>
<feature type="chain" id="PRO_0000207873" description="Protein PsbN">
    <location>
        <begin position="1"/>
        <end position="43"/>
    </location>
</feature>
<feature type="transmembrane region" description="Helical" evidence="1">
    <location>
        <begin position="7"/>
        <end position="27"/>
    </location>
</feature>
<gene>
    <name evidence="1" type="primary">psbN</name>
</gene>